<protein>
    <recommendedName>
        <fullName evidence="1">Cytochrome c-type biogenesis protein CcmE</fullName>
    </recommendedName>
    <alternativeName>
        <fullName evidence="1">Cytochrome c maturation protein E</fullName>
    </alternativeName>
    <alternativeName>
        <fullName evidence="1">Heme chaperone CcmE</fullName>
    </alternativeName>
</protein>
<organism>
    <name type="scientific">Rickettsia africae (strain ESF-5)</name>
    <dbReference type="NCBI Taxonomy" id="347255"/>
    <lineage>
        <taxon>Bacteria</taxon>
        <taxon>Pseudomonadati</taxon>
        <taxon>Pseudomonadota</taxon>
        <taxon>Alphaproteobacteria</taxon>
        <taxon>Rickettsiales</taxon>
        <taxon>Rickettsiaceae</taxon>
        <taxon>Rickettsieae</taxon>
        <taxon>Rickettsia</taxon>
        <taxon>spotted fever group</taxon>
    </lineage>
</organism>
<reference key="1">
    <citation type="journal article" date="2009" name="BMC Genomics">
        <title>Analysis of the Rickettsia africae genome reveals that virulence acquisition in Rickettsia species may be explained by genome reduction.</title>
        <authorList>
            <person name="Fournier P.-E."/>
            <person name="El Karkouri K."/>
            <person name="Leroy Q."/>
            <person name="Robert C."/>
            <person name="Giumelli B."/>
            <person name="Renesto P."/>
            <person name="Socolovschi C."/>
            <person name="Parola P."/>
            <person name="Audic S."/>
            <person name="Raoult D."/>
        </authorList>
    </citation>
    <scope>NUCLEOTIDE SEQUENCE [LARGE SCALE GENOMIC DNA]</scope>
    <source>
        <strain>ESF-5</strain>
    </source>
</reference>
<feature type="chain" id="PRO_1000216217" description="Cytochrome c-type biogenesis protein CcmE">
    <location>
        <begin position="1"/>
        <end position="128"/>
    </location>
</feature>
<feature type="topological domain" description="Cytoplasmic" evidence="1">
    <location>
        <begin position="1"/>
        <end position="8"/>
    </location>
</feature>
<feature type="transmembrane region" description="Helical; Signal-anchor for type II membrane protein" evidence="1">
    <location>
        <begin position="9"/>
        <end position="29"/>
    </location>
</feature>
<feature type="topological domain" description="Extracellular" evidence="1">
    <location>
        <begin position="30"/>
        <end position="128"/>
    </location>
</feature>
<feature type="binding site" description="covalent" evidence="1">
    <location>
        <position position="120"/>
    </location>
    <ligand>
        <name>heme</name>
        <dbReference type="ChEBI" id="CHEBI:30413"/>
    </ligand>
</feature>
<feature type="binding site" description="axial binding residue" evidence="1">
    <location>
        <position position="124"/>
    </location>
    <ligand>
        <name>heme</name>
        <dbReference type="ChEBI" id="CHEBI:30413"/>
    </ligand>
    <ligandPart>
        <name>Fe</name>
        <dbReference type="ChEBI" id="CHEBI:18248"/>
    </ligandPart>
</feature>
<proteinExistence type="inferred from homology"/>
<comment type="function">
    <text evidence="1">Heme chaperone required for the biogenesis of c-type cytochromes. Transiently binds heme delivered by CcmC and transfers the heme to apo-cytochromes in a process facilitated by CcmF and CcmH.</text>
</comment>
<comment type="subcellular location">
    <subcellularLocation>
        <location evidence="1">Cell membrane</location>
        <topology evidence="1">Single-pass type II membrane protein</topology>
    </subcellularLocation>
</comment>
<comment type="similarity">
    <text evidence="1">Belongs to the CcmE/CycJ family.</text>
</comment>
<gene>
    <name evidence="1" type="primary">ccmE</name>
    <name evidence="1" type="synonym">cycJ</name>
    <name type="ordered locus">RAF_ORF0813</name>
</gene>
<sequence length="128" mass="14506">MQKRVRNRLITIIICFCSACLGISIILYNLEKNIVFFLPPSKINEIEQGKELRVGGLVKTDSINKIADDKISFVITDNIKDFEILYQGTLPTLFRKGQGIIAIGQLSNGKFIARQLLAKHDENYRPPQ</sequence>
<name>CCME_RICAE</name>
<accession>C3PP25</accession>
<keyword id="KW-1003">Cell membrane</keyword>
<keyword id="KW-0201">Cytochrome c-type biogenesis</keyword>
<keyword id="KW-0349">Heme</keyword>
<keyword id="KW-0408">Iron</keyword>
<keyword id="KW-0472">Membrane</keyword>
<keyword id="KW-0479">Metal-binding</keyword>
<keyword id="KW-0735">Signal-anchor</keyword>
<keyword id="KW-0812">Transmembrane</keyword>
<keyword id="KW-1133">Transmembrane helix</keyword>
<dbReference type="EMBL" id="CP001612">
    <property type="protein sequence ID" value="ACP53685.1"/>
    <property type="molecule type" value="Genomic_DNA"/>
</dbReference>
<dbReference type="RefSeq" id="WP_012719873.1">
    <property type="nucleotide sequence ID" value="NC_012633.1"/>
</dbReference>
<dbReference type="SMR" id="C3PP25"/>
<dbReference type="KEGG" id="raf:RAF_ORF0813"/>
<dbReference type="HOGENOM" id="CLU_079503_1_1_5"/>
<dbReference type="Proteomes" id="UP000002305">
    <property type="component" value="Chromosome"/>
</dbReference>
<dbReference type="GO" id="GO:0005886">
    <property type="term" value="C:plasma membrane"/>
    <property type="evidence" value="ECO:0007669"/>
    <property type="project" value="UniProtKB-SubCell"/>
</dbReference>
<dbReference type="GO" id="GO:0020037">
    <property type="term" value="F:heme binding"/>
    <property type="evidence" value="ECO:0007669"/>
    <property type="project" value="InterPro"/>
</dbReference>
<dbReference type="GO" id="GO:0046872">
    <property type="term" value="F:metal ion binding"/>
    <property type="evidence" value="ECO:0007669"/>
    <property type="project" value="UniProtKB-KW"/>
</dbReference>
<dbReference type="GO" id="GO:0017004">
    <property type="term" value="P:cytochrome complex assembly"/>
    <property type="evidence" value="ECO:0007669"/>
    <property type="project" value="UniProtKB-KW"/>
</dbReference>
<dbReference type="Gene3D" id="2.40.50.140">
    <property type="entry name" value="Nucleic acid-binding proteins"/>
    <property type="match status" value="1"/>
</dbReference>
<dbReference type="HAMAP" id="MF_01959">
    <property type="entry name" value="CcmE"/>
    <property type="match status" value="1"/>
</dbReference>
<dbReference type="InterPro" id="IPR004329">
    <property type="entry name" value="CcmE"/>
</dbReference>
<dbReference type="InterPro" id="IPR036127">
    <property type="entry name" value="CcmE-like_sf"/>
</dbReference>
<dbReference type="InterPro" id="IPR012340">
    <property type="entry name" value="NA-bd_OB-fold"/>
</dbReference>
<dbReference type="NCBIfam" id="NF009727">
    <property type="entry name" value="PRK13254.1-1"/>
    <property type="match status" value="1"/>
</dbReference>
<dbReference type="PANTHER" id="PTHR34128">
    <property type="entry name" value="CYTOCHROME C-TYPE BIOGENESIS PROTEIN CCME HOMOLOG, MITOCHONDRIAL"/>
    <property type="match status" value="1"/>
</dbReference>
<dbReference type="PANTHER" id="PTHR34128:SF2">
    <property type="entry name" value="CYTOCHROME C-TYPE BIOGENESIS PROTEIN CCME HOMOLOG, MITOCHONDRIAL"/>
    <property type="match status" value="1"/>
</dbReference>
<dbReference type="Pfam" id="PF03100">
    <property type="entry name" value="CcmE"/>
    <property type="match status" value="1"/>
</dbReference>
<dbReference type="SUPFAM" id="SSF82093">
    <property type="entry name" value="Heme chaperone CcmE"/>
    <property type="match status" value="1"/>
</dbReference>
<evidence type="ECO:0000255" key="1">
    <source>
        <dbReference type="HAMAP-Rule" id="MF_01959"/>
    </source>
</evidence>